<sequence>MTQPLFLIGPRGCGKTTVGMALADSLNRRFVDTDQWLQSQLNMTVAEIVEREEWAGFRARETAALEAVTAASTVIATGGGIILTEFNRHFMQNNGIVVYLCAPVSVLVNRLQAAPEEDLRPTLTGKPLSEEVQEVLEERDALYREVAHIIIDATNEPSQVISEIRSALAQTINC</sequence>
<keyword id="KW-0028">Amino-acid biosynthesis</keyword>
<keyword id="KW-0057">Aromatic amino acid biosynthesis</keyword>
<keyword id="KW-0067">ATP-binding</keyword>
<keyword id="KW-0963">Cytoplasm</keyword>
<keyword id="KW-0418">Kinase</keyword>
<keyword id="KW-0460">Magnesium</keyword>
<keyword id="KW-0479">Metal-binding</keyword>
<keyword id="KW-0547">Nucleotide-binding</keyword>
<keyword id="KW-1185">Reference proteome</keyword>
<keyword id="KW-0808">Transferase</keyword>
<proteinExistence type="inferred from homology"/>
<reference key="1">
    <citation type="journal article" date="2002" name="Nucleic Acids Res.">
        <title>Genome sequence of Shigella flexneri 2a: insights into pathogenicity through comparison with genomes of Escherichia coli K12 and O157.</title>
        <authorList>
            <person name="Jin Q."/>
            <person name="Yuan Z."/>
            <person name="Xu J."/>
            <person name="Wang Y."/>
            <person name="Shen Y."/>
            <person name="Lu W."/>
            <person name="Wang J."/>
            <person name="Liu H."/>
            <person name="Yang J."/>
            <person name="Yang F."/>
            <person name="Zhang X."/>
            <person name="Zhang J."/>
            <person name="Yang G."/>
            <person name="Wu H."/>
            <person name="Qu D."/>
            <person name="Dong J."/>
            <person name="Sun L."/>
            <person name="Xue Y."/>
            <person name="Zhao A."/>
            <person name="Gao Y."/>
            <person name="Zhu J."/>
            <person name="Kan B."/>
            <person name="Ding K."/>
            <person name="Chen S."/>
            <person name="Cheng H."/>
            <person name="Yao Z."/>
            <person name="He B."/>
            <person name="Chen R."/>
            <person name="Ma D."/>
            <person name="Qiang B."/>
            <person name="Wen Y."/>
            <person name="Hou Y."/>
            <person name="Yu J."/>
        </authorList>
    </citation>
    <scope>NUCLEOTIDE SEQUENCE [LARGE SCALE GENOMIC DNA]</scope>
    <source>
        <strain>301 / Serotype 2a</strain>
    </source>
</reference>
<reference key="2">
    <citation type="journal article" date="2003" name="Infect. Immun.">
        <title>Complete genome sequence and comparative genomics of Shigella flexneri serotype 2a strain 2457T.</title>
        <authorList>
            <person name="Wei J."/>
            <person name="Goldberg M.B."/>
            <person name="Burland V."/>
            <person name="Venkatesan M.M."/>
            <person name="Deng W."/>
            <person name="Fournier G."/>
            <person name="Mayhew G.F."/>
            <person name="Plunkett G. III"/>
            <person name="Rose D.J."/>
            <person name="Darling A."/>
            <person name="Mau B."/>
            <person name="Perna N.T."/>
            <person name="Payne S.M."/>
            <person name="Runyen-Janecky L.J."/>
            <person name="Zhou S."/>
            <person name="Schwartz D.C."/>
            <person name="Blattner F.R."/>
        </authorList>
    </citation>
    <scope>NUCLEOTIDE SEQUENCE [LARGE SCALE GENOMIC DNA]</scope>
    <source>
        <strain>ATCC 700930 / 2457T / Serotype 2a</strain>
    </source>
</reference>
<comment type="function">
    <text evidence="2">Catalyzes the specific phosphorylation of the 3-hydroxyl group of shikimic acid using ATP as a cosubstrate.</text>
</comment>
<comment type="catalytic activity">
    <reaction evidence="2">
        <text>shikimate + ATP = 3-phosphoshikimate + ADP + H(+)</text>
        <dbReference type="Rhea" id="RHEA:13121"/>
        <dbReference type="ChEBI" id="CHEBI:15378"/>
        <dbReference type="ChEBI" id="CHEBI:30616"/>
        <dbReference type="ChEBI" id="CHEBI:36208"/>
        <dbReference type="ChEBI" id="CHEBI:145989"/>
        <dbReference type="ChEBI" id="CHEBI:456216"/>
        <dbReference type="EC" id="2.7.1.71"/>
    </reaction>
</comment>
<comment type="cofactor">
    <cofactor evidence="2">
        <name>Mg(2+)</name>
        <dbReference type="ChEBI" id="CHEBI:18420"/>
    </cofactor>
    <text evidence="2">Binds 1 Mg(2+) ion per subunit.</text>
</comment>
<comment type="pathway">
    <text evidence="2">Metabolic intermediate biosynthesis; chorismate biosynthesis; chorismate from D-erythrose 4-phosphate and phosphoenolpyruvate: step 5/7.</text>
</comment>
<comment type="subunit">
    <text evidence="2">Monomer.</text>
</comment>
<comment type="subcellular location">
    <subcellularLocation>
        <location evidence="2">Cytoplasm</location>
    </subcellularLocation>
</comment>
<comment type="domain">
    <text evidence="2">The LID domain closes over the active site upon ATP binding.</text>
</comment>
<comment type="similarity">
    <text evidence="2">Belongs to the shikimate kinase family. AroL subfamily.</text>
</comment>
<feature type="initiator methionine" description="Removed" evidence="1">
    <location>
        <position position="1"/>
    </location>
</feature>
<feature type="chain" id="PRO_0000237933" description="Shikimate kinase 2">
    <location>
        <begin position="2"/>
        <end position="174"/>
    </location>
</feature>
<feature type="region of interest" description="LID domain">
    <location>
        <begin position="112"/>
        <end position="126"/>
    </location>
</feature>
<feature type="binding site" evidence="2">
    <location>
        <begin position="12"/>
        <end position="17"/>
    </location>
    <ligand>
        <name>ATP</name>
        <dbReference type="ChEBI" id="CHEBI:30616"/>
    </ligand>
</feature>
<feature type="binding site" evidence="2">
    <location>
        <position position="16"/>
    </location>
    <ligand>
        <name>Mg(2+)</name>
        <dbReference type="ChEBI" id="CHEBI:18420"/>
    </ligand>
</feature>
<feature type="binding site" evidence="2">
    <location>
        <position position="32"/>
    </location>
    <ligand>
        <name>Mg(2+)</name>
        <dbReference type="ChEBI" id="CHEBI:18420"/>
    </ligand>
</feature>
<feature type="binding site" evidence="2">
    <location>
        <position position="34"/>
    </location>
    <ligand>
        <name>substrate</name>
    </ligand>
</feature>
<feature type="binding site" evidence="2">
    <location>
        <position position="58"/>
    </location>
    <ligand>
        <name>substrate</name>
    </ligand>
</feature>
<feature type="binding site" evidence="2">
    <location>
        <position position="79"/>
    </location>
    <ligand>
        <name>substrate</name>
    </ligand>
</feature>
<feature type="binding site" evidence="2">
    <location>
        <position position="120"/>
    </location>
    <ligand>
        <name>ATP</name>
        <dbReference type="ChEBI" id="CHEBI:30616"/>
    </ligand>
</feature>
<feature type="binding site" evidence="2">
    <location>
        <position position="139"/>
    </location>
    <ligand>
        <name>substrate</name>
    </ligand>
</feature>
<evidence type="ECO:0000250" key="1"/>
<evidence type="ECO:0000255" key="2">
    <source>
        <dbReference type="HAMAP-Rule" id="MF_01269"/>
    </source>
</evidence>
<name>AROL_SHIFL</name>
<dbReference type="EC" id="2.7.1.71" evidence="2"/>
<dbReference type="EMBL" id="AE014073">
    <property type="protein sequence ID" value="AAP15861.1"/>
    <property type="molecule type" value="Genomic_DNA"/>
</dbReference>
<dbReference type="EMBL" id="AE005674">
    <property type="protein sequence ID" value="AAN41983.2"/>
    <property type="molecule type" value="Genomic_DNA"/>
</dbReference>
<dbReference type="RefSeq" id="NP_706276.2">
    <property type="nucleotide sequence ID" value="NC_004337.2"/>
</dbReference>
<dbReference type="RefSeq" id="WP_000193385.1">
    <property type="nucleotide sequence ID" value="NZ_WPGW01000023.1"/>
</dbReference>
<dbReference type="SMR" id="Q83M66"/>
<dbReference type="STRING" id="198214.SF0324"/>
<dbReference type="PaxDb" id="198214-SF0324"/>
<dbReference type="GeneID" id="1027653"/>
<dbReference type="KEGG" id="sfl:SF0324"/>
<dbReference type="KEGG" id="sfx:S0332"/>
<dbReference type="PATRIC" id="fig|198214.7.peg.372"/>
<dbReference type="HOGENOM" id="CLU_057607_4_3_6"/>
<dbReference type="UniPathway" id="UPA00053">
    <property type="reaction ID" value="UER00088"/>
</dbReference>
<dbReference type="Proteomes" id="UP000001006">
    <property type="component" value="Chromosome"/>
</dbReference>
<dbReference type="Proteomes" id="UP000002673">
    <property type="component" value="Chromosome"/>
</dbReference>
<dbReference type="GO" id="GO:0005829">
    <property type="term" value="C:cytosol"/>
    <property type="evidence" value="ECO:0007669"/>
    <property type="project" value="TreeGrafter"/>
</dbReference>
<dbReference type="GO" id="GO:0005524">
    <property type="term" value="F:ATP binding"/>
    <property type="evidence" value="ECO:0007669"/>
    <property type="project" value="UniProtKB-UniRule"/>
</dbReference>
<dbReference type="GO" id="GO:0000287">
    <property type="term" value="F:magnesium ion binding"/>
    <property type="evidence" value="ECO:0007669"/>
    <property type="project" value="UniProtKB-UniRule"/>
</dbReference>
<dbReference type="GO" id="GO:0004765">
    <property type="term" value="F:shikimate kinase activity"/>
    <property type="evidence" value="ECO:0007669"/>
    <property type="project" value="UniProtKB-UniRule"/>
</dbReference>
<dbReference type="GO" id="GO:0008652">
    <property type="term" value="P:amino acid biosynthetic process"/>
    <property type="evidence" value="ECO:0007669"/>
    <property type="project" value="UniProtKB-KW"/>
</dbReference>
<dbReference type="GO" id="GO:0009073">
    <property type="term" value="P:aromatic amino acid family biosynthetic process"/>
    <property type="evidence" value="ECO:0007669"/>
    <property type="project" value="UniProtKB-KW"/>
</dbReference>
<dbReference type="GO" id="GO:0009423">
    <property type="term" value="P:chorismate biosynthetic process"/>
    <property type="evidence" value="ECO:0007669"/>
    <property type="project" value="UniProtKB-UniRule"/>
</dbReference>
<dbReference type="CDD" id="cd00464">
    <property type="entry name" value="SK"/>
    <property type="match status" value="1"/>
</dbReference>
<dbReference type="FunFam" id="3.40.50.300:FF:000408">
    <property type="entry name" value="Shikimate kinase 2"/>
    <property type="match status" value="1"/>
</dbReference>
<dbReference type="Gene3D" id="3.40.50.300">
    <property type="entry name" value="P-loop containing nucleotide triphosphate hydrolases"/>
    <property type="match status" value="1"/>
</dbReference>
<dbReference type="HAMAP" id="MF_00109">
    <property type="entry name" value="Shikimate_kinase"/>
    <property type="match status" value="1"/>
</dbReference>
<dbReference type="HAMAP" id="MF_01269">
    <property type="entry name" value="Shikimate_kinase_2"/>
    <property type="match status" value="1"/>
</dbReference>
<dbReference type="InterPro" id="IPR027417">
    <property type="entry name" value="P-loop_NTPase"/>
</dbReference>
<dbReference type="InterPro" id="IPR031322">
    <property type="entry name" value="Shikimate/glucono_kinase"/>
</dbReference>
<dbReference type="InterPro" id="IPR000623">
    <property type="entry name" value="Shikimate_kinase/TSH1"/>
</dbReference>
<dbReference type="InterPro" id="IPR027544">
    <property type="entry name" value="Shikimate_kinase_2"/>
</dbReference>
<dbReference type="InterPro" id="IPR023000">
    <property type="entry name" value="Shikimate_kinase_CS"/>
</dbReference>
<dbReference type="NCBIfam" id="NF002988">
    <property type="entry name" value="PRK03731.1"/>
    <property type="match status" value="1"/>
</dbReference>
<dbReference type="PANTHER" id="PTHR21087">
    <property type="entry name" value="SHIKIMATE KINASE"/>
    <property type="match status" value="1"/>
</dbReference>
<dbReference type="PANTHER" id="PTHR21087:SF21">
    <property type="entry name" value="SHIKIMATE KINASE 2"/>
    <property type="match status" value="1"/>
</dbReference>
<dbReference type="Pfam" id="PF01202">
    <property type="entry name" value="SKI"/>
    <property type="match status" value="1"/>
</dbReference>
<dbReference type="PRINTS" id="PR01100">
    <property type="entry name" value="SHIKIMTKNASE"/>
</dbReference>
<dbReference type="SUPFAM" id="SSF52540">
    <property type="entry name" value="P-loop containing nucleoside triphosphate hydrolases"/>
    <property type="match status" value="1"/>
</dbReference>
<dbReference type="PROSITE" id="PS01128">
    <property type="entry name" value="SHIKIMATE_KINASE"/>
    <property type="match status" value="1"/>
</dbReference>
<gene>
    <name evidence="2" type="primary">aroL</name>
    <name type="ordered locus">SF0324</name>
    <name type="ordered locus">S0332</name>
</gene>
<accession>Q83M66</accession>
<accession>Q7UDK5</accession>
<organism>
    <name type="scientific">Shigella flexneri</name>
    <dbReference type="NCBI Taxonomy" id="623"/>
    <lineage>
        <taxon>Bacteria</taxon>
        <taxon>Pseudomonadati</taxon>
        <taxon>Pseudomonadota</taxon>
        <taxon>Gammaproteobacteria</taxon>
        <taxon>Enterobacterales</taxon>
        <taxon>Enterobacteriaceae</taxon>
        <taxon>Shigella</taxon>
    </lineage>
</organism>
<protein>
    <recommendedName>
        <fullName evidence="2">Shikimate kinase 2</fullName>
        <shortName evidence="2">SK 2</shortName>
        <ecNumber evidence="2">2.7.1.71</ecNumber>
    </recommendedName>
</protein>